<comment type="catalytic activity">
    <reaction evidence="1">
        <text>tRNA(Phe) + L-phenylalanine + ATP = L-phenylalanyl-tRNA(Phe) + AMP + diphosphate + H(+)</text>
        <dbReference type="Rhea" id="RHEA:19413"/>
        <dbReference type="Rhea" id="RHEA-COMP:9668"/>
        <dbReference type="Rhea" id="RHEA-COMP:9699"/>
        <dbReference type="ChEBI" id="CHEBI:15378"/>
        <dbReference type="ChEBI" id="CHEBI:30616"/>
        <dbReference type="ChEBI" id="CHEBI:33019"/>
        <dbReference type="ChEBI" id="CHEBI:58095"/>
        <dbReference type="ChEBI" id="CHEBI:78442"/>
        <dbReference type="ChEBI" id="CHEBI:78531"/>
        <dbReference type="ChEBI" id="CHEBI:456215"/>
        <dbReference type="EC" id="6.1.1.20"/>
    </reaction>
</comment>
<comment type="cofactor">
    <cofactor evidence="1">
        <name>Mg(2+)</name>
        <dbReference type="ChEBI" id="CHEBI:18420"/>
    </cofactor>
    <text evidence="1">Binds 2 magnesium ions per tetramer.</text>
</comment>
<comment type="subunit">
    <text evidence="1">Tetramer of two alpha and two beta subunits.</text>
</comment>
<comment type="subcellular location">
    <subcellularLocation>
        <location evidence="1">Cytoplasm</location>
    </subcellularLocation>
</comment>
<comment type="similarity">
    <text evidence="1">Belongs to the phenylalanyl-tRNA synthetase beta subunit family. Type 1 subfamily.</text>
</comment>
<reference key="1">
    <citation type="journal article" date="2003" name="Genome Res.">
        <title>Tropheryma whipplei twist: a human pathogenic Actinobacteria with a reduced genome.</title>
        <authorList>
            <person name="Raoult D."/>
            <person name="Ogata H."/>
            <person name="Audic S."/>
            <person name="Robert C."/>
            <person name="Suhre K."/>
            <person name="Drancourt M."/>
            <person name="Claverie J.-M."/>
        </authorList>
    </citation>
    <scope>NUCLEOTIDE SEQUENCE [LARGE SCALE GENOMIC DNA]</scope>
    <source>
        <strain>Twist</strain>
    </source>
</reference>
<feature type="chain" id="PRO_0000232830" description="Phenylalanine--tRNA ligase beta subunit">
    <location>
        <begin position="1"/>
        <end position="962"/>
    </location>
</feature>
<feature type="domain" description="tRNA-binding" evidence="1">
    <location>
        <begin position="85"/>
        <end position="201"/>
    </location>
</feature>
<feature type="domain" description="B5" evidence="1">
    <location>
        <begin position="456"/>
        <end position="538"/>
    </location>
</feature>
<feature type="domain" description="FDX-ACB" evidence="1">
    <location>
        <begin position="870"/>
        <end position="961"/>
    </location>
</feature>
<feature type="region of interest" description="Insert">
    <location>
        <begin position="621"/>
        <end position="675"/>
    </location>
</feature>
<feature type="binding site" evidence="1">
    <location>
        <position position="516"/>
    </location>
    <ligand>
        <name>Mg(2+)</name>
        <dbReference type="ChEBI" id="CHEBI:18420"/>
        <note>shared with alpha subunit</note>
    </ligand>
</feature>
<feature type="binding site" evidence="1">
    <location>
        <position position="522"/>
    </location>
    <ligand>
        <name>Mg(2+)</name>
        <dbReference type="ChEBI" id="CHEBI:18420"/>
        <note>shared with alpha subunit</note>
    </ligand>
</feature>
<feature type="binding site" evidence="1">
    <location>
        <position position="525"/>
    </location>
    <ligand>
        <name>Mg(2+)</name>
        <dbReference type="ChEBI" id="CHEBI:18420"/>
        <note>shared with alpha subunit</note>
    </ligand>
</feature>
<feature type="binding site" evidence="1">
    <location>
        <position position="526"/>
    </location>
    <ligand>
        <name>Mg(2+)</name>
        <dbReference type="ChEBI" id="CHEBI:18420"/>
        <note>shared with alpha subunit</note>
    </ligand>
</feature>
<protein>
    <recommendedName>
        <fullName evidence="1">Phenylalanine--tRNA ligase beta subunit</fullName>
        <ecNumber evidence="1">6.1.1.20</ecNumber>
    </recommendedName>
    <alternativeName>
        <fullName evidence="1">Phenylalanyl-tRNA synthetase beta subunit</fullName>
        <shortName evidence="1">PheRS</shortName>
    </alternativeName>
</protein>
<gene>
    <name evidence="1" type="primary">pheT</name>
    <name type="ordered locus">TWT_168</name>
</gene>
<sequence>MAVLRVPVSWLLEYVHTQTGFVGETGIRSDTRRTHTDCPVAEDILESLLSVGFEGEILDRPELSGPIVVGRVLDFTEEVHSNGKTIRWCKVRVCAPVQPNNTPLSKDCNPSTQTGNFSNADTNSALETRDIVCGASNFSKGDLVVVTLPGSNLPGGFHVTARKVYGHLSDGMIASEKELGVGDNHDGILRLAEVFQGDELSKIREGDNALDLLALTDSAVAVSITPDRGYAMSIRGIAREYALANNIPFSDPLPDDVLPAGGLSIDLRCKPNAFFTLLIQEIENNQTPQWMVRRLQLAGIRSVCPVVDITNYVMVETGQPLHAYDYDAIQGSLCVRTADKKETLDTIDGRRLELHTDDLVVADANGVLSLAGVIGGSRSRVTSDTKRILLEAGNFNPIDISLSSRRHKLYTEASARFARSVDILIAQRALARAAELIRDLASGDITELGSAYINYTQQSPILLSTLDIERVVGCCFTREEIMSSLRAIGCDVSCDSDHSTPDTQVMLVTPPSFRADLVNVQDLAEEVIRVIGFNRIPSLRLSVPHREQPLQSQQYKLENGKLENGYTLSPVTPPRTPPVTFEQRRLLGQSLAACGHVEVICYPFVNLAAAGICHIDVTHNPDSTHNPDSGSDPIIPTGVTRITEPGSSGVSGPGNVGVKEKCSADTSIEHAPTTRAISLHNPIDATEGYLRRSLIPGLLQCAHRNLSRGLCDLSIFEIGRVFLGQLRTSNLIGCNSDSTCNACSRKNTIESMNEVYQPYTVSVLQTGSAIQKQPYTEGRKYDLADVFDSARQIARGLGVDFHFVQDKHPAFHPGRCAKVICKHHHIGYTGQILPTLANKHNLPDNVFACEINLDLVAQLGCSQEIVKTLPTSPAATQHLTLTLGNNIAAASVISVVKEGAGELLEDIRLIDEYKHEESDKKSLTFAMRFRDKEKTLTAQRVNLAKENAVRLASSKFGAIMRR</sequence>
<organism>
    <name type="scientific">Tropheryma whipplei (strain Twist)</name>
    <name type="common">Whipple's bacillus</name>
    <dbReference type="NCBI Taxonomy" id="203267"/>
    <lineage>
        <taxon>Bacteria</taxon>
        <taxon>Bacillati</taxon>
        <taxon>Actinomycetota</taxon>
        <taxon>Actinomycetes</taxon>
        <taxon>Micrococcales</taxon>
        <taxon>Tropherymataceae</taxon>
        <taxon>Tropheryma</taxon>
    </lineage>
</organism>
<keyword id="KW-0030">Aminoacyl-tRNA synthetase</keyword>
<keyword id="KW-0067">ATP-binding</keyword>
<keyword id="KW-0963">Cytoplasm</keyword>
<keyword id="KW-0436">Ligase</keyword>
<keyword id="KW-0460">Magnesium</keyword>
<keyword id="KW-0479">Metal-binding</keyword>
<keyword id="KW-0547">Nucleotide-binding</keyword>
<keyword id="KW-0648">Protein biosynthesis</keyword>
<keyword id="KW-1185">Reference proteome</keyword>
<keyword id="KW-0694">RNA-binding</keyword>
<keyword id="KW-0820">tRNA-binding</keyword>
<name>SYFB_TROWT</name>
<proteinExistence type="inferred from homology"/>
<dbReference type="EC" id="6.1.1.20" evidence="1"/>
<dbReference type="EMBL" id="AE014184">
    <property type="protein sequence ID" value="AAO44265.1"/>
    <property type="molecule type" value="Genomic_DNA"/>
</dbReference>
<dbReference type="RefSeq" id="WP_011102399.1">
    <property type="nucleotide sequence ID" value="NC_004572.3"/>
</dbReference>
<dbReference type="SMR" id="Q83GS8"/>
<dbReference type="STRING" id="203267.TWT_168"/>
<dbReference type="KEGG" id="twh:TWT_168"/>
<dbReference type="eggNOG" id="COG0072">
    <property type="taxonomic scope" value="Bacteria"/>
</dbReference>
<dbReference type="eggNOG" id="COG0073">
    <property type="taxonomic scope" value="Bacteria"/>
</dbReference>
<dbReference type="HOGENOM" id="CLU_016891_0_0_11"/>
<dbReference type="OrthoDB" id="9805455at2"/>
<dbReference type="Proteomes" id="UP000002200">
    <property type="component" value="Chromosome"/>
</dbReference>
<dbReference type="GO" id="GO:0009328">
    <property type="term" value="C:phenylalanine-tRNA ligase complex"/>
    <property type="evidence" value="ECO:0007669"/>
    <property type="project" value="TreeGrafter"/>
</dbReference>
<dbReference type="GO" id="GO:0005524">
    <property type="term" value="F:ATP binding"/>
    <property type="evidence" value="ECO:0007669"/>
    <property type="project" value="UniProtKB-UniRule"/>
</dbReference>
<dbReference type="GO" id="GO:0000287">
    <property type="term" value="F:magnesium ion binding"/>
    <property type="evidence" value="ECO:0007669"/>
    <property type="project" value="UniProtKB-UniRule"/>
</dbReference>
<dbReference type="GO" id="GO:0004826">
    <property type="term" value="F:phenylalanine-tRNA ligase activity"/>
    <property type="evidence" value="ECO:0007669"/>
    <property type="project" value="UniProtKB-UniRule"/>
</dbReference>
<dbReference type="GO" id="GO:0000049">
    <property type="term" value="F:tRNA binding"/>
    <property type="evidence" value="ECO:0007669"/>
    <property type="project" value="UniProtKB-KW"/>
</dbReference>
<dbReference type="GO" id="GO:0006432">
    <property type="term" value="P:phenylalanyl-tRNA aminoacylation"/>
    <property type="evidence" value="ECO:0007669"/>
    <property type="project" value="UniProtKB-UniRule"/>
</dbReference>
<dbReference type="CDD" id="cd02796">
    <property type="entry name" value="tRNA_bind_bactPheRS"/>
    <property type="match status" value="1"/>
</dbReference>
<dbReference type="Gene3D" id="3.30.56.10">
    <property type="match status" value="2"/>
</dbReference>
<dbReference type="Gene3D" id="3.30.930.10">
    <property type="entry name" value="Bira Bifunctional Protein, Domain 2"/>
    <property type="match status" value="1"/>
</dbReference>
<dbReference type="Gene3D" id="3.30.70.380">
    <property type="entry name" value="Ferrodoxin-fold anticodon-binding domain"/>
    <property type="match status" value="1"/>
</dbReference>
<dbReference type="Gene3D" id="2.40.50.140">
    <property type="entry name" value="Nucleic acid-binding proteins"/>
    <property type="match status" value="1"/>
</dbReference>
<dbReference type="Gene3D" id="3.50.40.10">
    <property type="entry name" value="Phenylalanyl-trna Synthetase, Chain B, domain 3"/>
    <property type="match status" value="1"/>
</dbReference>
<dbReference type="HAMAP" id="MF_00283">
    <property type="entry name" value="Phe_tRNA_synth_beta1"/>
    <property type="match status" value="1"/>
</dbReference>
<dbReference type="InterPro" id="IPR045864">
    <property type="entry name" value="aa-tRNA-synth_II/BPL/LPL"/>
</dbReference>
<dbReference type="InterPro" id="IPR005146">
    <property type="entry name" value="B3/B4_tRNA-bd"/>
</dbReference>
<dbReference type="InterPro" id="IPR009061">
    <property type="entry name" value="DNA-bd_dom_put_sf"/>
</dbReference>
<dbReference type="InterPro" id="IPR005121">
    <property type="entry name" value="Fdx_antiC-bd"/>
</dbReference>
<dbReference type="InterPro" id="IPR036690">
    <property type="entry name" value="Fdx_antiC-bd_sf"/>
</dbReference>
<dbReference type="InterPro" id="IPR012340">
    <property type="entry name" value="NA-bd_OB-fold"/>
</dbReference>
<dbReference type="InterPro" id="IPR045060">
    <property type="entry name" value="Phe-tRNA-ligase_IIc_bsu"/>
</dbReference>
<dbReference type="InterPro" id="IPR004532">
    <property type="entry name" value="Phe-tRNA-ligase_IIc_bsu_bact"/>
</dbReference>
<dbReference type="InterPro" id="IPR020825">
    <property type="entry name" value="Phe-tRNA_synthase-like_B3/B4"/>
</dbReference>
<dbReference type="InterPro" id="IPR041616">
    <property type="entry name" value="PheRS_beta_core"/>
</dbReference>
<dbReference type="InterPro" id="IPR002547">
    <property type="entry name" value="tRNA-bd_dom"/>
</dbReference>
<dbReference type="InterPro" id="IPR033714">
    <property type="entry name" value="tRNA_bind_bactPheRS"/>
</dbReference>
<dbReference type="InterPro" id="IPR005147">
    <property type="entry name" value="tRNA_synthase_B5-dom"/>
</dbReference>
<dbReference type="PANTHER" id="PTHR10947:SF0">
    <property type="entry name" value="PHENYLALANINE--TRNA LIGASE BETA SUBUNIT"/>
    <property type="match status" value="1"/>
</dbReference>
<dbReference type="PANTHER" id="PTHR10947">
    <property type="entry name" value="PHENYLALANYL-TRNA SYNTHETASE BETA CHAIN AND LEUCINE-RICH REPEAT-CONTAINING PROTEIN 47"/>
    <property type="match status" value="1"/>
</dbReference>
<dbReference type="Pfam" id="PF03483">
    <property type="entry name" value="B3_4"/>
    <property type="match status" value="1"/>
</dbReference>
<dbReference type="Pfam" id="PF03484">
    <property type="entry name" value="B5"/>
    <property type="match status" value="1"/>
</dbReference>
<dbReference type="Pfam" id="PF03147">
    <property type="entry name" value="FDX-ACB"/>
    <property type="match status" value="1"/>
</dbReference>
<dbReference type="Pfam" id="PF17759">
    <property type="entry name" value="tRNA_synthFbeta"/>
    <property type="match status" value="1"/>
</dbReference>
<dbReference type="SMART" id="SM00873">
    <property type="entry name" value="B3_4"/>
    <property type="match status" value="1"/>
</dbReference>
<dbReference type="SMART" id="SM00874">
    <property type="entry name" value="B5"/>
    <property type="match status" value="1"/>
</dbReference>
<dbReference type="SMART" id="SM00896">
    <property type="entry name" value="FDX-ACB"/>
    <property type="match status" value="1"/>
</dbReference>
<dbReference type="SUPFAM" id="SSF54991">
    <property type="entry name" value="Anticodon-binding domain of PheRS"/>
    <property type="match status" value="1"/>
</dbReference>
<dbReference type="SUPFAM" id="SSF55681">
    <property type="entry name" value="Class II aaRS and biotin synthetases"/>
    <property type="match status" value="1"/>
</dbReference>
<dbReference type="SUPFAM" id="SSF50249">
    <property type="entry name" value="Nucleic acid-binding proteins"/>
    <property type="match status" value="1"/>
</dbReference>
<dbReference type="SUPFAM" id="SSF56037">
    <property type="entry name" value="PheT/TilS domain"/>
    <property type="match status" value="1"/>
</dbReference>
<dbReference type="SUPFAM" id="SSF46955">
    <property type="entry name" value="Putative DNA-binding domain"/>
    <property type="match status" value="1"/>
</dbReference>
<dbReference type="PROSITE" id="PS51483">
    <property type="entry name" value="B5"/>
    <property type="match status" value="1"/>
</dbReference>
<dbReference type="PROSITE" id="PS51447">
    <property type="entry name" value="FDX_ACB"/>
    <property type="match status" value="1"/>
</dbReference>
<dbReference type="PROSITE" id="PS50886">
    <property type="entry name" value="TRBD"/>
    <property type="match status" value="1"/>
</dbReference>
<evidence type="ECO:0000255" key="1">
    <source>
        <dbReference type="HAMAP-Rule" id="MF_00283"/>
    </source>
</evidence>
<accession>Q83GS8</accession>